<organism>
    <name type="scientific">Salmonella arizonae (strain ATCC BAA-731 / CDC346-86 / RSK2980)</name>
    <dbReference type="NCBI Taxonomy" id="41514"/>
    <lineage>
        <taxon>Bacteria</taxon>
        <taxon>Pseudomonadati</taxon>
        <taxon>Pseudomonadota</taxon>
        <taxon>Gammaproteobacteria</taxon>
        <taxon>Enterobacterales</taxon>
        <taxon>Enterobacteriaceae</taxon>
        <taxon>Salmonella</taxon>
    </lineage>
</organism>
<comment type="function">
    <text evidence="1">Catalyzes the reversible conversion of 2-phosphoglycerate (2-PG) into phosphoenolpyruvate (PEP). It is essential for the degradation of carbohydrates via glycolysis.</text>
</comment>
<comment type="catalytic activity">
    <reaction evidence="1">
        <text>(2R)-2-phosphoglycerate = phosphoenolpyruvate + H2O</text>
        <dbReference type="Rhea" id="RHEA:10164"/>
        <dbReference type="ChEBI" id="CHEBI:15377"/>
        <dbReference type="ChEBI" id="CHEBI:58289"/>
        <dbReference type="ChEBI" id="CHEBI:58702"/>
        <dbReference type="EC" id="4.2.1.11"/>
    </reaction>
</comment>
<comment type="cofactor">
    <cofactor evidence="1">
        <name>Mg(2+)</name>
        <dbReference type="ChEBI" id="CHEBI:18420"/>
    </cofactor>
    <text evidence="1">Binds a second Mg(2+) ion via substrate during catalysis.</text>
</comment>
<comment type="pathway">
    <text evidence="1">Carbohydrate degradation; glycolysis; pyruvate from D-glyceraldehyde 3-phosphate: step 4/5.</text>
</comment>
<comment type="subunit">
    <text evidence="1">Component of the RNA degradosome, a multiprotein complex involved in RNA processing and mRNA degradation.</text>
</comment>
<comment type="subcellular location">
    <subcellularLocation>
        <location evidence="1">Cytoplasm</location>
    </subcellularLocation>
    <subcellularLocation>
        <location evidence="1">Secreted</location>
    </subcellularLocation>
    <subcellularLocation>
        <location evidence="1">Cell surface</location>
    </subcellularLocation>
    <text evidence="1">Fractions of enolase are present in both the cytoplasm and on the cell surface.</text>
</comment>
<comment type="similarity">
    <text evidence="1">Belongs to the enolase family.</text>
</comment>
<dbReference type="EC" id="4.2.1.11" evidence="1"/>
<dbReference type="EMBL" id="CP000880">
    <property type="protein sequence ID" value="ABX19963.1"/>
    <property type="molecule type" value="Genomic_DNA"/>
</dbReference>
<dbReference type="SMR" id="A9MF11"/>
<dbReference type="STRING" id="41514.SARI_00009"/>
<dbReference type="KEGG" id="ses:SARI_00009"/>
<dbReference type="HOGENOM" id="CLU_031223_2_1_6"/>
<dbReference type="UniPathway" id="UPA00109">
    <property type="reaction ID" value="UER00187"/>
</dbReference>
<dbReference type="Proteomes" id="UP000002084">
    <property type="component" value="Chromosome"/>
</dbReference>
<dbReference type="GO" id="GO:0009986">
    <property type="term" value="C:cell surface"/>
    <property type="evidence" value="ECO:0007669"/>
    <property type="project" value="UniProtKB-SubCell"/>
</dbReference>
<dbReference type="GO" id="GO:0005576">
    <property type="term" value="C:extracellular region"/>
    <property type="evidence" value="ECO:0007669"/>
    <property type="project" value="UniProtKB-SubCell"/>
</dbReference>
<dbReference type="GO" id="GO:0000015">
    <property type="term" value="C:phosphopyruvate hydratase complex"/>
    <property type="evidence" value="ECO:0007669"/>
    <property type="project" value="InterPro"/>
</dbReference>
<dbReference type="GO" id="GO:0000287">
    <property type="term" value="F:magnesium ion binding"/>
    <property type="evidence" value="ECO:0007669"/>
    <property type="project" value="UniProtKB-UniRule"/>
</dbReference>
<dbReference type="GO" id="GO:0004634">
    <property type="term" value="F:phosphopyruvate hydratase activity"/>
    <property type="evidence" value="ECO:0007669"/>
    <property type="project" value="UniProtKB-UniRule"/>
</dbReference>
<dbReference type="GO" id="GO:0006096">
    <property type="term" value="P:glycolytic process"/>
    <property type="evidence" value="ECO:0007669"/>
    <property type="project" value="UniProtKB-UniRule"/>
</dbReference>
<dbReference type="CDD" id="cd03313">
    <property type="entry name" value="enolase"/>
    <property type="match status" value="1"/>
</dbReference>
<dbReference type="FunFam" id="3.20.20.120:FF:000001">
    <property type="entry name" value="Enolase"/>
    <property type="match status" value="1"/>
</dbReference>
<dbReference type="FunFam" id="3.30.390.10:FF:000001">
    <property type="entry name" value="Enolase"/>
    <property type="match status" value="1"/>
</dbReference>
<dbReference type="Gene3D" id="3.20.20.120">
    <property type="entry name" value="Enolase-like C-terminal domain"/>
    <property type="match status" value="1"/>
</dbReference>
<dbReference type="Gene3D" id="3.30.390.10">
    <property type="entry name" value="Enolase-like, N-terminal domain"/>
    <property type="match status" value="1"/>
</dbReference>
<dbReference type="HAMAP" id="MF_00318">
    <property type="entry name" value="Enolase"/>
    <property type="match status" value="1"/>
</dbReference>
<dbReference type="InterPro" id="IPR000941">
    <property type="entry name" value="Enolase"/>
</dbReference>
<dbReference type="InterPro" id="IPR036849">
    <property type="entry name" value="Enolase-like_C_sf"/>
</dbReference>
<dbReference type="InterPro" id="IPR029017">
    <property type="entry name" value="Enolase-like_N"/>
</dbReference>
<dbReference type="InterPro" id="IPR020810">
    <property type="entry name" value="Enolase_C"/>
</dbReference>
<dbReference type="InterPro" id="IPR020809">
    <property type="entry name" value="Enolase_CS"/>
</dbReference>
<dbReference type="InterPro" id="IPR020811">
    <property type="entry name" value="Enolase_N"/>
</dbReference>
<dbReference type="NCBIfam" id="TIGR01060">
    <property type="entry name" value="eno"/>
    <property type="match status" value="1"/>
</dbReference>
<dbReference type="PANTHER" id="PTHR11902">
    <property type="entry name" value="ENOLASE"/>
    <property type="match status" value="1"/>
</dbReference>
<dbReference type="PANTHER" id="PTHR11902:SF1">
    <property type="entry name" value="ENOLASE"/>
    <property type="match status" value="1"/>
</dbReference>
<dbReference type="Pfam" id="PF00113">
    <property type="entry name" value="Enolase_C"/>
    <property type="match status" value="1"/>
</dbReference>
<dbReference type="Pfam" id="PF03952">
    <property type="entry name" value="Enolase_N"/>
    <property type="match status" value="1"/>
</dbReference>
<dbReference type="PIRSF" id="PIRSF001400">
    <property type="entry name" value="Enolase"/>
    <property type="match status" value="1"/>
</dbReference>
<dbReference type="PRINTS" id="PR00148">
    <property type="entry name" value="ENOLASE"/>
</dbReference>
<dbReference type="SFLD" id="SFLDF00002">
    <property type="entry name" value="enolase"/>
    <property type="match status" value="1"/>
</dbReference>
<dbReference type="SFLD" id="SFLDG00178">
    <property type="entry name" value="enolase"/>
    <property type="match status" value="1"/>
</dbReference>
<dbReference type="SMART" id="SM01192">
    <property type="entry name" value="Enolase_C"/>
    <property type="match status" value="1"/>
</dbReference>
<dbReference type="SMART" id="SM01193">
    <property type="entry name" value="Enolase_N"/>
    <property type="match status" value="1"/>
</dbReference>
<dbReference type="SUPFAM" id="SSF51604">
    <property type="entry name" value="Enolase C-terminal domain-like"/>
    <property type="match status" value="1"/>
</dbReference>
<dbReference type="SUPFAM" id="SSF54826">
    <property type="entry name" value="Enolase N-terminal domain-like"/>
    <property type="match status" value="1"/>
</dbReference>
<dbReference type="PROSITE" id="PS00164">
    <property type="entry name" value="ENOLASE"/>
    <property type="match status" value="1"/>
</dbReference>
<gene>
    <name evidence="1" type="primary">eno</name>
    <name type="ordered locus">SARI_00009</name>
</gene>
<reference key="1">
    <citation type="submission" date="2007-11" db="EMBL/GenBank/DDBJ databases">
        <authorList>
            <consortium name="The Salmonella enterica serovar Arizonae Genome Sequencing Project"/>
            <person name="McClelland M."/>
            <person name="Sanderson E.K."/>
            <person name="Porwollik S."/>
            <person name="Spieth J."/>
            <person name="Clifton W.S."/>
            <person name="Fulton R."/>
            <person name="Chunyan W."/>
            <person name="Wollam A."/>
            <person name="Shah N."/>
            <person name="Pepin K."/>
            <person name="Bhonagiri V."/>
            <person name="Nash W."/>
            <person name="Johnson M."/>
            <person name="Thiruvilangam P."/>
            <person name="Wilson R."/>
        </authorList>
    </citation>
    <scope>NUCLEOTIDE SEQUENCE [LARGE SCALE GENOMIC DNA]</scope>
    <source>
        <strain>ATCC BAA-731 / CDC346-86 / RSK2980</strain>
    </source>
</reference>
<accession>A9MF11</accession>
<feature type="chain" id="PRO_1000079147" description="Enolase">
    <location>
        <begin position="1"/>
        <end position="432"/>
    </location>
</feature>
<feature type="active site" description="Proton donor" evidence="1">
    <location>
        <position position="209"/>
    </location>
</feature>
<feature type="active site" description="Proton acceptor" evidence="1">
    <location>
        <position position="342"/>
    </location>
</feature>
<feature type="binding site" evidence="1">
    <location>
        <position position="167"/>
    </location>
    <ligand>
        <name>(2R)-2-phosphoglycerate</name>
        <dbReference type="ChEBI" id="CHEBI:58289"/>
    </ligand>
</feature>
<feature type="binding site" evidence="1">
    <location>
        <position position="246"/>
    </location>
    <ligand>
        <name>Mg(2+)</name>
        <dbReference type="ChEBI" id="CHEBI:18420"/>
    </ligand>
</feature>
<feature type="binding site" evidence="1">
    <location>
        <position position="290"/>
    </location>
    <ligand>
        <name>Mg(2+)</name>
        <dbReference type="ChEBI" id="CHEBI:18420"/>
    </ligand>
</feature>
<feature type="binding site" evidence="1">
    <location>
        <position position="317"/>
    </location>
    <ligand>
        <name>Mg(2+)</name>
        <dbReference type="ChEBI" id="CHEBI:18420"/>
    </ligand>
</feature>
<feature type="binding site" evidence="1">
    <location>
        <position position="342"/>
    </location>
    <ligand>
        <name>(2R)-2-phosphoglycerate</name>
        <dbReference type="ChEBI" id="CHEBI:58289"/>
    </ligand>
</feature>
<feature type="binding site" evidence="1">
    <location>
        <position position="371"/>
    </location>
    <ligand>
        <name>(2R)-2-phosphoglycerate</name>
        <dbReference type="ChEBI" id="CHEBI:58289"/>
    </ligand>
</feature>
<feature type="binding site" evidence="1">
    <location>
        <position position="372"/>
    </location>
    <ligand>
        <name>(2R)-2-phosphoglycerate</name>
        <dbReference type="ChEBI" id="CHEBI:58289"/>
    </ligand>
</feature>
<feature type="binding site" evidence="1">
    <location>
        <position position="393"/>
    </location>
    <ligand>
        <name>(2R)-2-phosphoglycerate</name>
        <dbReference type="ChEBI" id="CHEBI:58289"/>
    </ligand>
</feature>
<keyword id="KW-0963">Cytoplasm</keyword>
<keyword id="KW-0324">Glycolysis</keyword>
<keyword id="KW-0456">Lyase</keyword>
<keyword id="KW-0460">Magnesium</keyword>
<keyword id="KW-0479">Metal-binding</keyword>
<keyword id="KW-1185">Reference proteome</keyword>
<keyword id="KW-0964">Secreted</keyword>
<proteinExistence type="inferred from homology"/>
<protein>
    <recommendedName>
        <fullName evidence="1">Enolase</fullName>
        <ecNumber evidence="1">4.2.1.11</ecNumber>
    </recommendedName>
    <alternativeName>
        <fullName evidence="1">2-phospho-D-glycerate hydro-lyase</fullName>
    </alternativeName>
    <alternativeName>
        <fullName evidence="1">2-phosphoglycerate dehydratase</fullName>
    </alternativeName>
</protein>
<sequence>MSKIVKVIGREIIDSRGNPTVEAEVHLEGGFVGMAAAPSGASTGSREALELRDGDKSRFLGKGVTKAVGAVNGPIAQAILGKDAKDQAGIDKIMIDLDGTENKSNFGANAILAVSLANAKAAAAAKGMPLYEHIAELNGTPGKYSMPVPMMNIINGGEHADNNVDIQEFMIQPVGAKTVKEAIRMGSEVFHHLAKVLKGKGMNTAVGDEGGYAPNLGSNAEALAVIAEAVKAAGYELGKDITLAMDCAASEFYKDGKYVLAGEGNKAFTSEEFTHFLEELTKQYPIVSIEDGLDESDWDGFAYQTKVLGDKIQLVGDDLFVTNTKILKEGIEKGIANSILIKFNQIGSLTETLAAIKMAKDAGYTAVISHRSGETEDATIADLAVGTAAGQIKTGSMSRSDRVAKYNQLIRIEEALGEKAPYNGRKEIKGQA</sequence>
<name>ENO_SALAR</name>
<evidence type="ECO:0000255" key="1">
    <source>
        <dbReference type="HAMAP-Rule" id="MF_00318"/>
    </source>
</evidence>